<proteinExistence type="evidence at protein level"/>
<protein>
    <recommendedName>
        <fullName>Vacuolar ATPase assembly protein VMA22</fullName>
    </recommendedName>
    <alternativeName>
        <fullName evidence="8">Coiled-coil domain-containing protein 115</fullName>
    </alternativeName>
</protein>
<keyword id="KW-0025">Alternative splicing</keyword>
<keyword id="KW-0175">Coiled coil</keyword>
<keyword id="KW-0900">Congenital disorder of glycosylation</keyword>
<keyword id="KW-0968">Cytoplasmic vesicle</keyword>
<keyword id="KW-0225">Disease variant</keyword>
<keyword id="KW-0256">Endoplasmic reticulum</keyword>
<keyword id="KW-0967">Endosome</keyword>
<keyword id="KW-0458">Lysosome</keyword>
<keyword id="KW-1267">Proteomics identification</keyword>
<keyword id="KW-1185">Reference proteome</keyword>
<organism>
    <name type="scientific">Homo sapiens</name>
    <name type="common">Human</name>
    <dbReference type="NCBI Taxonomy" id="9606"/>
    <lineage>
        <taxon>Eukaryota</taxon>
        <taxon>Metazoa</taxon>
        <taxon>Chordata</taxon>
        <taxon>Craniata</taxon>
        <taxon>Vertebrata</taxon>
        <taxon>Euteleostomi</taxon>
        <taxon>Mammalia</taxon>
        <taxon>Eutheria</taxon>
        <taxon>Euarchontoglires</taxon>
        <taxon>Primates</taxon>
        <taxon>Haplorrhini</taxon>
        <taxon>Catarrhini</taxon>
        <taxon>Hominidae</taxon>
        <taxon>Homo</taxon>
    </lineage>
</organism>
<dbReference type="EMBL" id="AK054693">
    <property type="protein sequence ID" value="BAB70794.1"/>
    <property type="molecule type" value="mRNA"/>
</dbReference>
<dbReference type="EMBL" id="AK295922">
    <property type="protein sequence ID" value="BAG58709.1"/>
    <property type="molecule type" value="mRNA"/>
</dbReference>
<dbReference type="EMBL" id="AC132479">
    <property type="protein sequence ID" value="AAY24075.1"/>
    <property type="molecule type" value="Genomic_DNA"/>
</dbReference>
<dbReference type="EMBL" id="BC006429">
    <property type="protein sequence ID" value="AAH06429.2"/>
    <property type="molecule type" value="mRNA"/>
</dbReference>
<dbReference type="CCDS" id="CCDS2159.1">
    <molecule id="Q96NT0-1"/>
</dbReference>
<dbReference type="RefSeq" id="NP_001308047.1">
    <property type="nucleotide sequence ID" value="NM_001321118.1"/>
</dbReference>
<dbReference type="RefSeq" id="NP_001308048.1">
    <property type="nucleotide sequence ID" value="NM_001321119.1"/>
</dbReference>
<dbReference type="RefSeq" id="NP_115733.2">
    <molecule id="Q96NT0-1"/>
    <property type="nucleotide sequence ID" value="NM_032357.3"/>
</dbReference>
<dbReference type="SMR" id="Q96NT0"/>
<dbReference type="BioGRID" id="124043">
    <property type="interactions" value="116"/>
</dbReference>
<dbReference type="FunCoup" id="Q96NT0">
    <property type="interactions" value="2105"/>
</dbReference>
<dbReference type="IntAct" id="Q96NT0">
    <property type="interactions" value="75"/>
</dbReference>
<dbReference type="MINT" id="Q96NT0"/>
<dbReference type="STRING" id="9606.ENSP00000259229"/>
<dbReference type="iPTMnet" id="Q96NT0"/>
<dbReference type="PhosphoSitePlus" id="Q96NT0"/>
<dbReference type="BioMuta" id="CCDC115"/>
<dbReference type="DMDM" id="74732634"/>
<dbReference type="jPOST" id="Q96NT0"/>
<dbReference type="MassIVE" id="Q96NT0"/>
<dbReference type="PaxDb" id="9606-ENSP00000259229"/>
<dbReference type="PeptideAtlas" id="Q96NT0"/>
<dbReference type="ProteomicsDB" id="4345"/>
<dbReference type="ProteomicsDB" id="77553">
    <molecule id="Q96NT0-1"/>
</dbReference>
<dbReference type="Pumba" id="Q96NT0"/>
<dbReference type="TopDownProteomics" id="Q96NT0-1">
    <molecule id="Q96NT0-1"/>
</dbReference>
<dbReference type="Antibodypedia" id="33494">
    <property type="antibodies" value="69 antibodies from 20 providers"/>
</dbReference>
<dbReference type="DNASU" id="84317"/>
<dbReference type="Ensembl" id="ENST00000259229.7">
    <molecule id="Q96NT0-1"/>
    <property type="protein sequence ID" value="ENSP00000259229.2"/>
    <property type="gene ID" value="ENSG00000136710.10"/>
</dbReference>
<dbReference type="Ensembl" id="ENST00000651709.1">
    <molecule id="Q96NT0-2"/>
    <property type="protein sequence ID" value="ENSP00000499101.1"/>
    <property type="gene ID" value="ENSG00000136710.10"/>
</dbReference>
<dbReference type="GeneID" id="84317"/>
<dbReference type="KEGG" id="hsa:84317"/>
<dbReference type="MANE-Select" id="ENST00000259229.7">
    <property type="protein sequence ID" value="ENSP00000259229.2"/>
    <property type="RefSeq nucleotide sequence ID" value="NM_032357.4"/>
    <property type="RefSeq protein sequence ID" value="NP_115733.2"/>
</dbReference>
<dbReference type="UCSC" id="uc002tqy.3">
    <molecule id="Q96NT0-1"/>
    <property type="organism name" value="human"/>
</dbReference>
<dbReference type="AGR" id="HGNC:28178"/>
<dbReference type="CTD" id="84317"/>
<dbReference type="DisGeNET" id="84317"/>
<dbReference type="GeneCards" id="CCDC115"/>
<dbReference type="HGNC" id="HGNC:28178">
    <property type="gene designation" value="VMA22"/>
</dbReference>
<dbReference type="HPA" id="ENSG00000136710">
    <property type="expression patterns" value="Low tissue specificity"/>
</dbReference>
<dbReference type="MalaCards" id="CCDC115"/>
<dbReference type="MIM" id="613734">
    <property type="type" value="gene"/>
</dbReference>
<dbReference type="MIM" id="616828">
    <property type="type" value="phenotype"/>
</dbReference>
<dbReference type="neXtProt" id="NX_Q96NT0"/>
<dbReference type="OpenTargets" id="ENSG00000136710"/>
<dbReference type="Orphanet" id="468684">
    <property type="disease" value="CCDC115-CDG"/>
</dbReference>
<dbReference type="PharmGKB" id="PA145149287"/>
<dbReference type="VEuPathDB" id="HostDB:ENSG00000136710"/>
<dbReference type="eggNOG" id="ENOG502S392">
    <property type="taxonomic scope" value="Eukaryota"/>
</dbReference>
<dbReference type="GeneTree" id="ENSGT00390000012929"/>
<dbReference type="HOGENOM" id="CLU_107415_0_0_1"/>
<dbReference type="InParanoid" id="Q96NT0"/>
<dbReference type="OMA" id="RMEPRVC"/>
<dbReference type="OrthoDB" id="408631at2759"/>
<dbReference type="PAN-GO" id="Q96NT0">
    <property type="GO annotations" value="2 GO annotations based on evolutionary models"/>
</dbReference>
<dbReference type="PhylomeDB" id="Q96NT0"/>
<dbReference type="TreeFam" id="TF324647"/>
<dbReference type="PathwayCommons" id="Q96NT0"/>
<dbReference type="Reactome" id="R-HSA-8980692">
    <property type="pathway name" value="RHOA GTPase cycle"/>
</dbReference>
<dbReference type="SignaLink" id="Q96NT0"/>
<dbReference type="BioGRID-ORCS" id="84317">
    <property type="hits" value="561 hits in 1186 CRISPR screens"/>
</dbReference>
<dbReference type="GenomeRNAi" id="84317"/>
<dbReference type="Pharos" id="Q96NT0">
    <property type="development level" value="Tbio"/>
</dbReference>
<dbReference type="PRO" id="PR:Q96NT0"/>
<dbReference type="Proteomes" id="UP000005640">
    <property type="component" value="Chromosome 2"/>
</dbReference>
<dbReference type="RNAct" id="Q96NT0">
    <property type="molecule type" value="protein"/>
</dbReference>
<dbReference type="Bgee" id="ENSG00000136710">
    <property type="expression patterns" value="Expressed in kidney epithelium and 181 other cell types or tissues"/>
</dbReference>
<dbReference type="ExpressionAtlas" id="Q96NT0">
    <property type="expression patterns" value="baseline and differential"/>
</dbReference>
<dbReference type="GO" id="GO:0030137">
    <property type="term" value="C:COPI-coated vesicle"/>
    <property type="evidence" value="ECO:0000314"/>
    <property type="project" value="UniProtKB"/>
</dbReference>
<dbReference type="GO" id="GO:0005783">
    <property type="term" value="C:endoplasmic reticulum"/>
    <property type="evidence" value="ECO:0000314"/>
    <property type="project" value="UniProtKB"/>
</dbReference>
<dbReference type="GO" id="GO:0005793">
    <property type="term" value="C:endoplasmic reticulum-Golgi intermediate compartment"/>
    <property type="evidence" value="ECO:0000314"/>
    <property type="project" value="UniProtKB"/>
</dbReference>
<dbReference type="GO" id="GO:0005768">
    <property type="term" value="C:endosome"/>
    <property type="evidence" value="ECO:0007669"/>
    <property type="project" value="UniProtKB-SubCell"/>
</dbReference>
<dbReference type="GO" id="GO:0005764">
    <property type="term" value="C:lysosome"/>
    <property type="evidence" value="ECO:0007669"/>
    <property type="project" value="UniProtKB-SubCell"/>
</dbReference>
<dbReference type="GO" id="GO:0016020">
    <property type="term" value="C:membrane"/>
    <property type="evidence" value="ECO:0007005"/>
    <property type="project" value="UniProtKB"/>
</dbReference>
<dbReference type="GO" id="GO:0016471">
    <property type="term" value="C:vacuolar proton-transporting V-type ATPase complex"/>
    <property type="evidence" value="ECO:0000314"/>
    <property type="project" value="UniProtKB"/>
</dbReference>
<dbReference type="GO" id="GO:0051082">
    <property type="term" value="F:unfolded protein binding"/>
    <property type="evidence" value="ECO:0000318"/>
    <property type="project" value="GO_Central"/>
</dbReference>
<dbReference type="GO" id="GO:0036295">
    <property type="term" value="P:cellular response to increased oxygen levels"/>
    <property type="evidence" value="ECO:0000315"/>
    <property type="project" value="UniProtKB"/>
</dbReference>
<dbReference type="GO" id="GO:0006879">
    <property type="term" value="P:intracellular iron ion homeostasis"/>
    <property type="evidence" value="ECO:0000315"/>
    <property type="project" value="UniProtKB"/>
</dbReference>
<dbReference type="GO" id="GO:0007042">
    <property type="term" value="P:lysosomal lumen acidification"/>
    <property type="evidence" value="ECO:0000315"/>
    <property type="project" value="UniProtKB"/>
</dbReference>
<dbReference type="GO" id="GO:1905146">
    <property type="term" value="P:lysosomal protein catabolic process"/>
    <property type="evidence" value="ECO:0000315"/>
    <property type="project" value="UniProtKB"/>
</dbReference>
<dbReference type="GO" id="GO:0070072">
    <property type="term" value="P:vacuolar proton-transporting V-type ATPase complex assembly"/>
    <property type="evidence" value="ECO:0007669"/>
    <property type="project" value="InterPro"/>
</dbReference>
<dbReference type="FunFam" id="1.10.287.3240:FF:000005">
    <property type="entry name" value="coiled-coil domain-containing protein 115"/>
    <property type="match status" value="1"/>
</dbReference>
<dbReference type="Gene3D" id="1.10.287.3240">
    <property type="match status" value="1"/>
</dbReference>
<dbReference type="InterPro" id="IPR040357">
    <property type="entry name" value="Vma22/CCDC115"/>
</dbReference>
<dbReference type="PANTHER" id="PTHR31996">
    <property type="entry name" value="COILED-COIL DOMAIN-CONTAINING PROTEIN 115"/>
    <property type="match status" value="1"/>
</dbReference>
<dbReference type="PANTHER" id="PTHR31996:SF2">
    <property type="entry name" value="COILED-COIL DOMAIN-CONTAINING PROTEIN 115"/>
    <property type="match status" value="1"/>
</dbReference>
<dbReference type="Pfam" id="PF21730">
    <property type="entry name" value="Vma22_CCDC115"/>
    <property type="match status" value="1"/>
</dbReference>
<comment type="function">
    <text evidence="5 6">Accessory component of the proton-transporting vacuolar (V)-ATPase protein pump involved in intracellular iron homeostasis. In aerobic conditions, required for intracellular iron homeostasis, thus triggering the activity of Fe(2+) prolyl hydroxylase (PHD) enzymes, and leading to HIF1A hydroxylation and subsequent proteasomal degradation. Necessary for endolysosomal acidification and lysosomal degradation (PubMed:28296633). May be involved in Golgi homeostasis (PubMed:26833332).</text>
</comment>
<comment type="subunit">
    <text evidence="6">Accessory component of the multisubunit proton-transporting vacuolar (V)-ATPase protein pump.</text>
</comment>
<comment type="interaction">
    <interactant intactId="EBI-2810325">
        <id>Q96NT0</id>
    </interactant>
    <interactant intactId="EBI-11096309">
        <id>Q9NYB9-2</id>
        <label>ABI2</label>
    </interactant>
    <organismsDiffer>false</organismsDiffer>
    <experiments>5</experiments>
</comment>
<comment type="interaction">
    <interactant intactId="EBI-2810325">
        <id>Q96NT0</id>
    </interactant>
    <interactant intactId="EBI-12150557">
        <id>O15296</id>
        <label>ALOX15B</label>
    </interactant>
    <organismsDiffer>false</organismsDiffer>
    <experiments>3</experiments>
</comment>
<comment type="interaction">
    <interactant intactId="EBI-2810325">
        <id>Q96NT0</id>
    </interactant>
    <interactant intactId="EBI-1104552">
        <id>Q9NYP9</id>
        <label>MIS18A</label>
    </interactant>
    <organismsDiffer>false</organismsDiffer>
    <experiments>3</experiments>
</comment>
<comment type="interaction">
    <interactant intactId="EBI-2810325">
        <id>Q96NT0</id>
    </interactant>
    <interactant intactId="EBI-741158">
        <id>Q96HA8</id>
        <label>NTAQ1</label>
    </interactant>
    <organismsDiffer>false</organismsDiffer>
    <experiments>3</experiments>
</comment>
<comment type="interaction">
    <interactant intactId="EBI-2810325">
        <id>Q96NT0</id>
    </interactant>
    <interactant intactId="EBI-355482">
        <id>P54136</id>
        <label>RARS1</label>
    </interactant>
    <organismsDiffer>false</organismsDiffer>
    <experiments>4</experiments>
</comment>
<comment type="subcellular location">
    <subcellularLocation>
        <location evidence="1">Endosome</location>
    </subcellularLocation>
    <subcellularLocation>
        <location evidence="1">Lysosome</location>
    </subcellularLocation>
    <subcellularLocation>
        <location evidence="5">Endoplasmic reticulum-Golgi intermediate compartment</location>
    </subcellularLocation>
    <subcellularLocation>
        <location evidence="5">Cytoplasmic vesicle</location>
        <location evidence="5">COPI-coated vesicle</location>
    </subcellularLocation>
    <subcellularLocation>
        <location evidence="6">Endoplasmic reticulum</location>
    </subcellularLocation>
</comment>
<comment type="alternative products">
    <event type="alternative splicing"/>
    <isoform>
        <id>Q96NT0-1</id>
        <name>1</name>
        <sequence type="displayed"/>
    </isoform>
    <isoform>
        <id>Q96NT0-2</id>
        <name>2</name>
        <sequence type="described" ref="VSP_056115 VSP_056116"/>
    </isoform>
</comment>
<comment type="tissue specificity">
    <text evidence="4">Expressed throughout the brain.</text>
</comment>
<comment type="disease" evidence="5">
    <disease id="DI-04626">
        <name>Congenital disorder of glycosylation 2O</name>
        <acronym>CDG2O</acronym>
        <description>A form of congenital disorder of glycosylation, a genetically heterogeneous group of autosomal recessive, multisystem disorders caused by a defect in glycoprotein biosynthesis and characterized by under-glycosylated serum glycoproteins. Congenital disorders of glycosylation result in a wide variety of clinical features, such as defects in the nervous system development, psychomotor retardation, dysmorphic features, hypotonia, coagulation disorders, and immunodeficiency. The broad spectrum of features reflects the critical role of N-glycoproteins during embryonic development, differentiation, and maintenance of cell functions. CDG2O is characterized by hepatosplenomegaly, liver failure, hypotonia, and psychomotor disability.</description>
        <dbReference type="MIM" id="616828"/>
    </disease>
    <text>The disease is caused by variants affecting the gene represented in this entry.</text>
</comment>
<accession>Q96NT0</accession>
<accession>B4DJ47</accession>
<accession>Q9BR88</accession>
<feature type="chain" id="PRO_0000279403" description="Vacuolar ATPase assembly protein VMA22">
    <location>
        <begin position="1"/>
        <end position="180"/>
    </location>
</feature>
<feature type="region of interest" description="Disordered" evidence="3">
    <location>
        <begin position="92"/>
        <end position="122"/>
    </location>
</feature>
<feature type="coiled-coil region" evidence="2">
    <location>
        <begin position="16"/>
        <end position="37"/>
    </location>
</feature>
<feature type="coiled-coil region" evidence="2">
    <location>
        <begin position="153"/>
        <end position="176"/>
    </location>
</feature>
<feature type="compositionally biased region" description="Basic and acidic residues" evidence="3">
    <location>
        <begin position="92"/>
        <end position="101"/>
    </location>
</feature>
<feature type="splice variant" id="VSP_056115" description="In isoform 2." evidence="7">
    <original>MAALDLRAELDSLVLQLLGDLEELEGKRTVLNARVE</original>
    <variation>MGTPLDGGSRVPIGCPAKLRRVTRKKVAPDL</variation>
    <location>
        <begin position="1"/>
        <end position="36"/>
    </location>
</feature>
<feature type="splice variant" id="VSP_056116" description="In isoform 2." evidence="7">
    <original>LQLAADIASLQNRIDWGRSQLRGLQEKLKQLEPGAA</original>
    <variation>VLEAKKRKCFLERVIQCVVSPAAEQEAEDESCPEDWAAAVPAETSAKAI</variation>
    <location>
        <begin position="145"/>
        <end position="180"/>
    </location>
</feature>
<feature type="sequence variant" id="VAR_075752" description="In CDG2O; dbSNP:rs869025583." evidence="5">
    <original>D</original>
    <variation>Y</variation>
    <location>
        <position position="11"/>
    </location>
</feature>
<feature type="sequence variant" id="VAR_075753" description="In CDG2O; dbSNP:rs751325113." evidence="5">
    <original>L</original>
    <variation>S</variation>
    <location>
        <position position="31"/>
    </location>
</feature>
<name>VMA22_HUMAN</name>
<reference key="1">
    <citation type="journal article" date="2004" name="Nat. Genet.">
        <title>Complete sequencing and characterization of 21,243 full-length human cDNAs.</title>
        <authorList>
            <person name="Ota T."/>
            <person name="Suzuki Y."/>
            <person name="Nishikawa T."/>
            <person name="Otsuki T."/>
            <person name="Sugiyama T."/>
            <person name="Irie R."/>
            <person name="Wakamatsu A."/>
            <person name="Hayashi K."/>
            <person name="Sato H."/>
            <person name="Nagai K."/>
            <person name="Kimura K."/>
            <person name="Makita H."/>
            <person name="Sekine M."/>
            <person name="Obayashi M."/>
            <person name="Nishi T."/>
            <person name="Shibahara T."/>
            <person name="Tanaka T."/>
            <person name="Ishii S."/>
            <person name="Yamamoto J."/>
            <person name="Saito K."/>
            <person name="Kawai Y."/>
            <person name="Isono Y."/>
            <person name="Nakamura Y."/>
            <person name="Nagahari K."/>
            <person name="Murakami K."/>
            <person name="Yasuda T."/>
            <person name="Iwayanagi T."/>
            <person name="Wagatsuma M."/>
            <person name="Shiratori A."/>
            <person name="Sudo H."/>
            <person name="Hosoiri T."/>
            <person name="Kaku Y."/>
            <person name="Kodaira H."/>
            <person name="Kondo H."/>
            <person name="Sugawara M."/>
            <person name="Takahashi M."/>
            <person name="Kanda K."/>
            <person name="Yokoi T."/>
            <person name="Furuya T."/>
            <person name="Kikkawa E."/>
            <person name="Omura Y."/>
            <person name="Abe K."/>
            <person name="Kamihara K."/>
            <person name="Katsuta N."/>
            <person name="Sato K."/>
            <person name="Tanikawa M."/>
            <person name="Yamazaki M."/>
            <person name="Ninomiya K."/>
            <person name="Ishibashi T."/>
            <person name="Yamashita H."/>
            <person name="Murakawa K."/>
            <person name="Fujimori K."/>
            <person name="Tanai H."/>
            <person name="Kimata M."/>
            <person name="Watanabe M."/>
            <person name="Hiraoka S."/>
            <person name="Chiba Y."/>
            <person name="Ishida S."/>
            <person name="Ono Y."/>
            <person name="Takiguchi S."/>
            <person name="Watanabe S."/>
            <person name="Yosida M."/>
            <person name="Hotuta T."/>
            <person name="Kusano J."/>
            <person name="Kanehori K."/>
            <person name="Takahashi-Fujii A."/>
            <person name="Hara H."/>
            <person name="Tanase T.-O."/>
            <person name="Nomura Y."/>
            <person name="Togiya S."/>
            <person name="Komai F."/>
            <person name="Hara R."/>
            <person name="Takeuchi K."/>
            <person name="Arita M."/>
            <person name="Imose N."/>
            <person name="Musashino K."/>
            <person name="Yuuki H."/>
            <person name="Oshima A."/>
            <person name="Sasaki N."/>
            <person name="Aotsuka S."/>
            <person name="Yoshikawa Y."/>
            <person name="Matsunawa H."/>
            <person name="Ichihara T."/>
            <person name="Shiohata N."/>
            <person name="Sano S."/>
            <person name="Moriya S."/>
            <person name="Momiyama H."/>
            <person name="Satoh N."/>
            <person name="Takami S."/>
            <person name="Terashima Y."/>
            <person name="Suzuki O."/>
            <person name="Nakagawa S."/>
            <person name="Senoh A."/>
            <person name="Mizoguchi H."/>
            <person name="Goto Y."/>
            <person name="Shimizu F."/>
            <person name="Wakebe H."/>
            <person name="Hishigaki H."/>
            <person name="Watanabe T."/>
            <person name="Sugiyama A."/>
            <person name="Takemoto M."/>
            <person name="Kawakami B."/>
            <person name="Yamazaki M."/>
            <person name="Watanabe K."/>
            <person name="Kumagai A."/>
            <person name="Itakura S."/>
            <person name="Fukuzumi Y."/>
            <person name="Fujimori Y."/>
            <person name="Komiyama M."/>
            <person name="Tashiro H."/>
            <person name="Tanigami A."/>
            <person name="Fujiwara T."/>
            <person name="Ono T."/>
            <person name="Yamada K."/>
            <person name="Fujii Y."/>
            <person name="Ozaki K."/>
            <person name="Hirao M."/>
            <person name="Ohmori Y."/>
            <person name="Kawabata A."/>
            <person name="Hikiji T."/>
            <person name="Kobatake N."/>
            <person name="Inagaki H."/>
            <person name="Ikema Y."/>
            <person name="Okamoto S."/>
            <person name="Okitani R."/>
            <person name="Kawakami T."/>
            <person name="Noguchi S."/>
            <person name="Itoh T."/>
            <person name="Shigeta K."/>
            <person name="Senba T."/>
            <person name="Matsumura K."/>
            <person name="Nakajima Y."/>
            <person name="Mizuno T."/>
            <person name="Morinaga M."/>
            <person name="Sasaki M."/>
            <person name="Togashi T."/>
            <person name="Oyama M."/>
            <person name="Hata H."/>
            <person name="Watanabe M."/>
            <person name="Komatsu T."/>
            <person name="Mizushima-Sugano J."/>
            <person name="Satoh T."/>
            <person name="Shirai Y."/>
            <person name="Takahashi Y."/>
            <person name="Nakagawa K."/>
            <person name="Okumura K."/>
            <person name="Nagase T."/>
            <person name="Nomura N."/>
            <person name="Kikuchi H."/>
            <person name="Masuho Y."/>
            <person name="Yamashita R."/>
            <person name="Nakai K."/>
            <person name="Yada T."/>
            <person name="Nakamura Y."/>
            <person name="Ohara O."/>
            <person name="Isogai T."/>
            <person name="Sugano S."/>
        </authorList>
    </citation>
    <scope>NUCLEOTIDE SEQUENCE [LARGE SCALE MRNA] (ISOFORMS 1 AND 2)</scope>
    <source>
        <tissue>Cerebellum</tissue>
        <tissue>Substantia nigra</tissue>
    </source>
</reference>
<reference key="2">
    <citation type="journal article" date="2005" name="Nature">
        <title>Generation and annotation of the DNA sequences of human chromosomes 2 and 4.</title>
        <authorList>
            <person name="Hillier L.W."/>
            <person name="Graves T.A."/>
            <person name="Fulton R.S."/>
            <person name="Fulton L.A."/>
            <person name="Pepin K.H."/>
            <person name="Minx P."/>
            <person name="Wagner-McPherson C."/>
            <person name="Layman D."/>
            <person name="Wylie K."/>
            <person name="Sekhon M."/>
            <person name="Becker M.C."/>
            <person name="Fewell G.A."/>
            <person name="Delehaunty K.D."/>
            <person name="Miner T.L."/>
            <person name="Nash W.E."/>
            <person name="Kremitzki C."/>
            <person name="Oddy L."/>
            <person name="Du H."/>
            <person name="Sun H."/>
            <person name="Bradshaw-Cordum H."/>
            <person name="Ali J."/>
            <person name="Carter J."/>
            <person name="Cordes M."/>
            <person name="Harris A."/>
            <person name="Isak A."/>
            <person name="van Brunt A."/>
            <person name="Nguyen C."/>
            <person name="Du F."/>
            <person name="Courtney L."/>
            <person name="Kalicki J."/>
            <person name="Ozersky P."/>
            <person name="Abbott S."/>
            <person name="Armstrong J."/>
            <person name="Belter E.A."/>
            <person name="Caruso L."/>
            <person name="Cedroni M."/>
            <person name="Cotton M."/>
            <person name="Davidson T."/>
            <person name="Desai A."/>
            <person name="Elliott G."/>
            <person name="Erb T."/>
            <person name="Fronick C."/>
            <person name="Gaige T."/>
            <person name="Haakenson W."/>
            <person name="Haglund K."/>
            <person name="Holmes A."/>
            <person name="Harkins R."/>
            <person name="Kim K."/>
            <person name="Kruchowski S.S."/>
            <person name="Strong C.M."/>
            <person name="Grewal N."/>
            <person name="Goyea E."/>
            <person name="Hou S."/>
            <person name="Levy A."/>
            <person name="Martinka S."/>
            <person name="Mead K."/>
            <person name="McLellan M.D."/>
            <person name="Meyer R."/>
            <person name="Randall-Maher J."/>
            <person name="Tomlinson C."/>
            <person name="Dauphin-Kohlberg S."/>
            <person name="Kozlowicz-Reilly A."/>
            <person name="Shah N."/>
            <person name="Swearengen-Shahid S."/>
            <person name="Snider J."/>
            <person name="Strong J.T."/>
            <person name="Thompson J."/>
            <person name="Yoakum M."/>
            <person name="Leonard S."/>
            <person name="Pearman C."/>
            <person name="Trani L."/>
            <person name="Radionenko M."/>
            <person name="Waligorski J.E."/>
            <person name="Wang C."/>
            <person name="Rock S.M."/>
            <person name="Tin-Wollam A.-M."/>
            <person name="Maupin R."/>
            <person name="Latreille P."/>
            <person name="Wendl M.C."/>
            <person name="Yang S.-P."/>
            <person name="Pohl C."/>
            <person name="Wallis J.W."/>
            <person name="Spieth J."/>
            <person name="Bieri T.A."/>
            <person name="Berkowicz N."/>
            <person name="Nelson J.O."/>
            <person name="Osborne J."/>
            <person name="Ding L."/>
            <person name="Meyer R."/>
            <person name="Sabo A."/>
            <person name="Shotland Y."/>
            <person name="Sinha P."/>
            <person name="Wohldmann P.E."/>
            <person name="Cook L.L."/>
            <person name="Hickenbotham M.T."/>
            <person name="Eldred J."/>
            <person name="Williams D."/>
            <person name="Jones T.A."/>
            <person name="She X."/>
            <person name="Ciccarelli F.D."/>
            <person name="Izaurralde E."/>
            <person name="Taylor J."/>
            <person name="Schmutz J."/>
            <person name="Myers R.M."/>
            <person name="Cox D.R."/>
            <person name="Huang X."/>
            <person name="McPherson J.D."/>
            <person name="Mardis E.R."/>
            <person name="Clifton S.W."/>
            <person name="Warren W.C."/>
            <person name="Chinwalla A.T."/>
            <person name="Eddy S.R."/>
            <person name="Marra M.A."/>
            <person name="Ovcharenko I."/>
            <person name="Furey T.S."/>
            <person name="Miller W."/>
            <person name="Eichler E.E."/>
            <person name="Bork P."/>
            <person name="Suyama M."/>
            <person name="Torrents D."/>
            <person name="Waterston R.H."/>
            <person name="Wilson R.K."/>
        </authorList>
    </citation>
    <scope>NUCLEOTIDE SEQUENCE [LARGE SCALE GENOMIC DNA]</scope>
</reference>
<reference key="3">
    <citation type="journal article" date="2004" name="Genome Res.">
        <title>The status, quality, and expansion of the NIH full-length cDNA project: the Mammalian Gene Collection (MGC).</title>
        <authorList>
            <consortium name="The MGC Project Team"/>
        </authorList>
    </citation>
    <scope>NUCLEOTIDE SEQUENCE [LARGE SCALE MRNA] (ISOFORM 1)</scope>
    <source>
        <tissue>Eye</tissue>
    </source>
</reference>
<reference key="4">
    <citation type="journal article" date="2006" name="Gene Expr. Patterns">
        <title>Expression of coiled-coil protein 1, a novel gene downstream of FGF2, in the developing brain.</title>
        <authorList>
            <person name="Pellicano F."/>
            <person name="Inglis-Broadgate S.L."/>
            <person name="Pante G."/>
            <person name="Ansorge W."/>
            <person name="Iwata T."/>
        </authorList>
    </citation>
    <scope>TISSUE SPECIFICITY</scope>
</reference>
<reference key="5">
    <citation type="journal article" date="2015" name="Proteomics">
        <title>N-terminome analysis of the human mitochondrial proteome.</title>
        <authorList>
            <person name="Vaca Jacome A.S."/>
            <person name="Rabilloud T."/>
            <person name="Schaeffer-Reiss C."/>
            <person name="Rompais M."/>
            <person name="Ayoub D."/>
            <person name="Lane L."/>
            <person name="Bairoch A."/>
            <person name="Van Dorsselaer A."/>
            <person name="Carapito C."/>
        </authorList>
    </citation>
    <scope>IDENTIFICATION BY MASS SPECTROMETRY [LARGE SCALE ANALYSIS]</scope>
</reference>
<reference key="6">
    <citation type="journal article" date="2016" name="Am. J. Hum. Genet.">
        <title>CCDC115 deficiency causes a disorder of Golgi homeostasis with abnormal protein glycosylation.</title>
        <authorList>
            <person name="Jansen J.C."/>
            <person name="Cirak S."/>
            <person name="van Scherpenzeel M."/>
            <person name="Timal S."/>
            <person name="Reunert J."/>
            <person name="Rust S."/>
            <person name="Perez B."/>
            <person name="Vicogne D."/>
            <person name="Krawitz P."/>
            <person name="Wada Y."/>
            <person name="Ashikov A."/>
            <person name="Perez-Cerda C."/>
            <person name="Medrano C."/>
            <person name="Arnoldy A."/>
            <person name="Hoischen A."/>
            <person name="Huijben K."/>
            <person name="Steenbergen G."/>
            <person name="Quelhas D."/>
            <person name="Diogo L."/>
            <person name="Rymen D."/>
            <person name="Jaeken J."/>
            <person name="Guffon N."/>
            <person name="Cheillan D."/>
            <person name="van den Heuvel L.P."/>
            <person name="Maeda Y."/>
            <person name="Kaiser O."/>
            <person name="Schara U."/>
            <person name="Gerner P."/>
            <person name="van den Boogert M.A."/>
            <person name="Holleboom A.G."/>
            <person name="Nassogne M.C."/>
            <person name="Sokal E."/>
            <person name="Salomon J."/>
            <person name="van den Bogaart G."/>
            <person name="Drenth J.P."/>
            <person name="Huynen M.A."/>
            <person name="Veltman J.A."/>
            <person name="Wevers R.A."/>
            <person name="Morava E."/>
            <person name="Matthijs G."/>
            <person name="Foulquier F."/>
            <person name="Marquardt T."/>
            <person name="Lefeber D.J."/>
        </authorList>
    </citation>
    <scope>SUBCELLULAR LOCATION</scope>
    <scope>VARIANTS CDG2O TYR-11 AND SER-31</scope>
    <scope>FUNCTION</scope>
    <scope>INVOLVEMENT IN CDG2O</scope>
</reference>
<reference key="7">
    <citation type="journal article" date="2017" name="Elife">
        <title>The vacuolar-ATPase complex and assembly factors, TMEM199 and CCDC115, control HIF1alpha prolyl hydroxylation by regulating cellular iron levels.</title>
        <authorList>
            <person name="Miles A.L."/>
            <person name="Burr S.P."/>
            <person name="Grice G.L."/>
            <person name="Nathan J.A."/>
        </authorList>
    </citation>
    <scope>FUNCTION</scope>
    <scope>SUBUNIT</scope>
    <scope>SUBCELLULAR LOCATION</scope>
</reference>
<sequence>MAALDLRAELDSLVLQLLGDLEELEGKRTVLNARVEEGWLSLAKARYAMGAKSVGPLQYASHMEPQVCLHASEAQEGLQKFKVVRAGVHAPEEVGPREAGLRRRKGPTKTPEPESSEAPQDPLNWFGILVPHSLRQAQASFRDGLQLAADIASLQNRIDWGRSQLRGLQEKLKQLEPGAA</sequence>
<evidence type="ECO:0000250" key="1">
    <source>
        <dbReference type="UniProtKB" id="Q8VE99"/>
    </source>
</evidence>
<evidence type="ECO:0000255" key="2"/>
<evidence type="ECO:0000256" key="3">
    <source>
        <dbReference type="SAM" id="MobiDB-lite"/>
    </source>
</evidence>
<evidence type="ECO:0000269" key="4">
    <source>
    </source>
</evidence>
<evidence type="ECO:0000269" key="5">
    <source>
    </source>
</evidence>
<evidence type="ECO:0000269" key="6">
    <source>
    </source>
</evidence>
<evidence type="ECO:0000303" key="7">
    <source>
    </source>
</evidence>
<evidence type="ECO:0000303" key="8">
    <source>
    </source>
</evidence>
<evidence type="ECO:0000312" key="9">
    <source>
        <dbReference type="HGNC" id="HGNC:28178"/>
    </source>
</evidence>
<gene>
    <name evidence="9" type="primary">VMA22</name>
    <name evidence="8" type="synonym">CCDC115</name>
</gene>